<reference key="1">
    <citation type="journal article" date="1981" name="Nucleic Acids Res.">
        <title>The nucleotide sequence of the cloned rpoD gene for the RNA polymerase sigma subunit from E coli K12.</title>
        <authorList>
            <person name="Burton Z.F."/>
            <person name="Burgess R.R."/>
            <person name="Lin J."/>
            <person name="Moore D."/>
            <person name="Holder S."/>
            <person name="Gross C.A."/>
        </authorList>
    </citation>
    <scope>NUCLEOTIDE SEQUENCE [GENOMIC DNA]</scope>
    <source>
        <strain>K12</strain>
    </source>
</reference>
<reference key="2">
    <citation type="journal article" date="1997" name="Science">
        <title>The complete genome sequence of Escherichia coli K-12.</title>
        <authorList>
            <person name="Blattner F.R."/>
            <person name="Plunkett G. III"/>
            <person name="Bloch C.A."/>
            <person name="Perna N.T."/>
            <person name="Burland V."/>
            <person name="Riley M."/>
            <person name="Collado-Vides J."/>
            <person name="Glasner J.D."/>
            <person name="Rode C.K."/>
            <person name="Mayhew G.F."/>
            <person name="Gregor J."/>
            <person name="Davis N.W."/>
            <person name="Kirkpatrick H.A."/>
            <person name="Goeden M.A."/>
            <person name="Rose D.J."/>
            <person name="Mau B."/>
            <person name="Shao Y."/>
        </authorList>
    </citation>
    <scope>NUCLEOTIDE SEQUENCE [LARGE SCALE GENOMIC DNA]</scope>
    <source>
        <strain>K12 / MG1655 / ATCC 47076</strain>
    </source>
</reference>
<reference key="3">
    <citation type="journal article" date="2006" name="Mol. Syst. Biol.">
        <title>Highly accurate genome sequences of Escherichia coli K-12 strains MG1655 and W3110.</title>
        <authorList>
            <person name="Hayashi K."/>
            <person name="Morooka N."/>
            <person name="Yamamoto Y."/>
            <person name="Fujita K."/>
            <person name="Isono K."/>
            <person name="Choi S."/>
            <person name="Ohtsubo E."/>
            <person name="Baba T."/>
            <person name="Wanner B.L."/>
            <person name="Mori H."/>
            <person name="Horiuchi T."/>
        </authorList>
    </citation>
    <scope>NUCLEOTIDE SEQUENCE [LARGE SCALE GENOMIC DNA]</scope>
    <source>
        <strain>K12 / W3110 / ATCC 27325 / DSM 5911</strain>
    </source>
</reference>
<reference key="4">
    <citation type="journal article" date="1975" name="FEBS Lett.">
        <title>The subunits of DNA-dependent RNA polymerase from E. coli: I. Amino acid analysis and primary structure of the N-terminal regions.</title>
        <authorList>
            <person name="Fujiki H."/>
            <person name="Zurek G."/>
        </authorList>
    </citation>
    <scope>PROTEIN SEQUENCE OF 1-4</scope>
    <source>
        <strain>K12</strain>
    </source>
</reference>
<reference key="5">
    <citation type="journal article" date="1987" name="J. Biol. Chem.">
        <title>Promoter selectivity of Escherichia coli RNA polymerase. Purification and properties of holoenzyme containing the heat-shock sigma subunit.</title>
        <authorList>
            <person name="Fujita N."/>
            <person name="Nomura T."/>
            <person name="Ishihama A."/>
        </authorList>
    </citation>
    <scope>FUNCTION</scope>
    <source>
        <strain>K12 / W3350 / ATCC 27020</strain>
    </source>
</reference>
<reference key="6">
    <citation type="journal article" date="1991" name="Mol. Gen. Genet.">
        <title>Growth phase-dependent modification of RNA polymerase in Escherichia coli.</title>
        <authorList>
            <person name="Ozaki M."/>
            <person name="Wada A."/>
            <person name="Fujita N."/>
            <person name="Ishihama A."/>
        </authorList>
    </citation>
    <scope>FUNCTION</scope>
</reference>
<reference key="7">
    <citation type="journal article" date="1992" name="Cell">
        <title>Polypeptides containing highly conserved regions of transcription initiation factor sigma 70 exhibit specificity of binding to promoter DNA.</title>
        <authorList>
            <person name="Dombroski A.J."/>
            <person name="Walter W.A."/>
            <person name="Record M.T. Jr."/>
            <person name="Siegele D.A."/>
            <person name="Gross C.A."/>
        </authorList>
    </citation>
    <scope>FUNCTION</scope>
    <scope>DNA-BINDING</scope>
    <scope>DOMAIN</scope>
</reference>
<reference key="8">
    <citation type="journal article" date="1994" name="J. Mol. Biol.">
        <title>Role of the sigma 70 subunit of Escherichia coli RNA polymerase in transcription activation.</title>
        <authorList>
            <person name="Kumar A."/>
            <person name="Grimes B."/>
            <person name="Fujita N."/>
            <person name="Makino K."/>
            <person name="Malloch R.A."/>
            <person name="Hayward R.S."/>
            <person name="Ishihama A."/>
        </authorList>
    </citation>
    <scope>FUNCTION</scope>
</reference>
<reference key="9">
    <citation type="journal article" date="1996" name="J. Bacteriol.">
        <title>Regulation of RNA polymerase sigma subunit synthesis in Escherichia coli: intracellular levels of four species of sigma subunit under various growth conditions.</title>
        <authorList>
            <person name="Jishage M."/>
            <person name="Iwata A."/>
            <person name="Ueda S."/>
            <person name="Ishihama A."/>
        </authorList>
    </citation>
    <scope>FUNCTION</scope>
    <source>
        <strain>K12</strain>
    </source>
</reference>
<reference key="10">
    <citation type="journal article" date="1997" name="Electrophoresis">
        <title>Escherichia coli proteome analysis using the gene-protein database.</title>
        <authorList>
            <person name="VanBogelen R.A."/>
            <person name="Abshire K.Z."/>
            <person name="Moldover B."/>
            <person name="Olson E.R."/>
            <person name="Neidhardt F.C."/>
        </authorList>
    </citation>
    <scope>IDENTIFICATION BY 2D-GEL</scope>
</reference>
<reference key="11">
    <citation type="journal article" date="2000" name="J. Mol. Biol.">
        <title>Interactions between activating region 3 of the Escherichia coli cyclic AMP receptor protein and region 4 of the RNA polymerase sigma(70) subunit: application of suppression genetics.</title>
        <authorList>
            <person name="Rhodius V.A."/>
            <person name="Busby S.J."/>
        </authorList>
    </citation>
    <scope>PROBABLE INTERACTION WITH CRP</scope>
    <scope>MUTAGENESIS OF ARG-596</scope>
</reference>
<reference key="12">
    <citation type="journal article" date="2011" name="Nucleic Acids Res.">
        <title>In vitro transcription profiling of the sigmaS subunit of bacterial RNA polymerase: re-definition of the sigmaS regulon and identification of sigmaS-specific promoter sequence elements.</title>
        <authorList>
            <person name="Maciag A."/>
            <person name="Peano C."/>
            <person name="Pietrelli A."/>
            <person name="Egli T."/>
            <person name="De Bellis G."/>
            <person name="Landini P."/>
        </authorList>
    </citation>
    <scope>FUNCTION</scope>
    <source>
        <strain>K12 / MG1655 / ATCC 47076</strain>
    </source>
</reference>
<reference key="13">
    <citation type="journal article" date="2014" name="Structure">
        <title>Structure of the DNA-binding and RNA-polymerase-binding region of transcription antitermination factor lambdaQ.</title>
        <authorList>
            <person name="Vorobiev S.M."/>
            <person name="Gensler Y."/>
            <person name="Vahedian-Movahed H."/>
            <person name="Seetharaman J."/>
            <person name="Su M."/>
            <person name="Huang J.Y."/>
            <person name="Xiao R."/>
            <person name="Kornhaber G."/>
            <person name="Montelione G.T."/>
            <person name="Tong L."/>
            <person name="Ebright R.H."/>
            <person name="Nickels B.E."/>
        </authorList>
    </citation>
    <scope>INTERACTION WITH ESCHERICHIA PHAGE LAMBDA ANTITERMINATION PROTEIN Q (MICROBIAL INFECTION)</scope>
    <scope>MUTAGENESIS OF ALA-553</scope>
</reference>
<reference evidence="18" key="14">
    <citation type="journal article" date="1996" name="Cell">
        <title>Crystal structure of a sigma 70 subunit fragment from E. coli RNA polymerase.</title>
        <authorList>
            <person name="Malhotra A."/>
            <person name="Severinova E."/>
            <person name="Darst S.A."/>
        </authorList>
    </citation>
    <scope>X-RAY CRYSTALLOGRAPHY (2.60 ANGSTROMS) OF 114-448</scope>
</reference>
<reference evidence="19" key="15">
    <citation type="journal article" date="2004" name="EMBO J.">
        <title>T4 AsiA blocks DNA recognition by remodeling sigma70 region 4.</title>
        <authorList>
            <person name="Lambert L.J."/>
            <person name="Wei Y."/>
            <person name="Schirf V."/>
            <person name="Demeler B."/>
            <person name="Werner M.H."/>
        </authorList>
    </citation>
    <scope>STRUCTURE BY NMR OF 533-613 IN COMPLEX WITH PHAGE T4 PROTEIN ASIA</scope>
    <scope>SUBUNIT</scope>
</reference>
<reference key="16">
    <citation type="journal article" date="2007" name="J. Mol. Biol.">
        <title>Crystal structure of the Escherichia coli regulator of sigma70, Rsd, in complex with sigma70 domain 4.</title>
        <authorList>
            <person name="Patikoglou G.A."/>
            <person name="Westblade L.F."/>
            <person name="Campbell E.A."/>
            <person name="Lamour V."/>
            <person name="Lane W.J."/>
            <person name="Darst S.A."/>
        </authorList>
    </citation>
    <scope>X-RAY CRYSTALLOGRAPHY (2.60 ANGSTROMS) OF 546-613 IN COMPLEX WITH RSD</scope>
    <scope>SUBUNIT</scope>
</reference>
<reference evidence="20" key="17">
    <citation type="journal article" date="2009" name="Proc. Natl. Acad. Sci. U.S.A.">
        <title>Three-dimensional EM structure of an intact activator-dependent transcription initiation complex.</title>
        <authorList>
            <person name="Hudson B.P."/>
            <person name="Quispe J."/>
            <person name="Lara-Gonzalez S."/>
            <person name="Kim Y."/>
            <person name="Berman H.M."/>
            <person name="Arnold E."/>
            <person name="Ebright R.H."/>
            <person name="Lawson C.L."/>
        </authorList>
    </citation>
    <scope>STRUCTURE BY ELECTRON MICROSCOPY (19.80 ANGSTROMS) IN COMPLEX WITH RPOA; RPOB; RPOC; RPOZ; CRP AND DNA</scope>
    <scope>DOMAIN</scope>
    <scope>DNA-BINDING</scope>
    <scope>SUBUNIT</scope>
</reference>
<reference evidence="21" key="18">
    <citation type="journal article" date="2011" name="EMBO J.">
        <title>The structure of a transcription activation subcomplex reveals how sigma(70) is recruited to PhoB promoters.</title>
        <authorList>
            <person name="Blanco A.G."/>
            <person name="Canals A."/>
            <person name="Bernues J."/>
            <person name="Sola M."/>
            <person name="Coll M."/>
        </authorList>
    </citation>
    <scope>X-RAY CRYSTALLOGRAPHY (4.33 ANGSTROMS) OF 533-609 IN COMPLEX WITH RPOB; PHOB AND PHO BOX DNA</scope>
    <scope>DNA-BINDING</scope>
    <scope>SUBUNIT</scope>
    <scope>DOMAIN</scope>
</reference>
<reference evidence="24" key="19">
    <citation type="journal article" date="2013" name="J. Biol. Chem.">
        <title>X-ray crystal structure of Escherichia coli RNA polymerase sigma70 holoenzyme.</title>
        <authorList>
            <person name="Murakami K.S."/>
        </authorList>
    </citation>
    <scope>X-RAY CRYSTALLOGRAPHY (3.70 ANGSTROMS) IN COMPLEX WITH RPOA; RPOB; RPOC AND RPOZ</scope>
    <scope>SUBUNIT</scope>
</reference>
<reference evidence="22 23" key="20">
    <citation type="journal article" date="2014" name="Elife">
        <title>Transcription inhibition by the depsipeptide antibiotic salinamide A.</title>
        <authorList>
            <person name="Degen D."/>
            <person name="Feng Y."/>
            <person name="Zhang Y."/>
            <person name="Ebright K.Y."/>
            <person name="Ebright Y.W."/>
            <person name="Gigliotti M."/>
            <person name="Vahedian-Movahed H."/>
            <person name="Mandal S."/>
            <person name="Talaue M."/>
            <person name="Connell N."/>
            <person name="Arnold E."/>
            <person name="Fenical W."/>
            <person name="Ebright R.H."/>
        </authorList>
    </citation>
    <scope>X-RAY CRYSTALLOGRAPHY (3.90 ANGSTROMS) IN COMPLEX WITH RPOA; RPOB; RPOC; RPOZ AND SALINAMIDE A</scope>
    <scope>FUNCTION</scope>
    <scope>SUBUNIT</scope>
</reference>
<protein>
    <recommendedName>
        <fullName evidence="1">RNA polymerase sigma factor RpoD</fullName>
    </recommendedName>
    <alternativeName>
        <fullName evidence="1">Sigma-70</fullName>
    </alternativeName>
</protein>
<proteinExistence type="evidence at protein level"/>
<accession>P00579</accession>
<accession>Q2M9D8</accession>
<sequence>MEQNPQSQLKLLVTRGKEQGYLTYAEVNDHLPEDIVDSDQIEDIIQMINDMGIQVMEEAPDADDLMLAENTADEDAAEAAAQVLSSVESEIGRTTDPVRMYMREMGTVELLTREGEIDIAKRIEDGINQVQCSVAEYPEAITYLLEQYDRVEAEEARLSDLITGFVDPNAEEDLAPTATHVGSELSQEDLDDDEDEDEEDGDDDSADDDNSIDPELAREKFAELRAQYVVTRDTIKAKGRSHATAQEEILKLSEVFKQFRLVPKQFDYLVNSMRVMMDRVRTQERLIMKLCVEQCKMPKKNFITLFTGNETSDTWFNAAIAMNKPWSEKLHDVSEEVHRALQKLQQIEEETGLTIEQVKDINRRMSIGEAKARRAKKEMVEANLRLVISIAKKYTNRGLQFLDLIQEGNIGLMKAVDKFEYRRGYKFSTYATWWIRQAITRSIADQARTIRIPVHMIETINKLNRISRQMLQEMGREPTPEELAERMLMPEDKIRKVLKIAKEPISMETPIGDDEDSHLGDFIEDTTLELPLDSATTESLRAATHDVLAGLTAREAKVLRMRFGIDMNTDYTLEEVGKQFDVTRERIRQIEAKALRKLRHPSRSEVLRSFLDD</sequence>
<dbReference type="EMBL" id="J01687">
    <property type="protein sequence ID" value="AAA24601.1"/>
    <property type="molecule type" value="Genomic_DNA"/>
</dbReference>
<dbReference type="EMBL" id="U28379">
    <property type="protein sequence ID" value="AAA89147.1"/>
    <property type="molecule type" value="Genomic_DNA"/>
</dbReference>
<dbReference type="EMBL" id="U00096">
    <property type="protein sequence ID" value="AAC76103.1"/>
    <property type="molecule type" value="Genomic_DNA"/>
</dbReference>
<dbReference type="EMBL" id="AP009048">
    <property type="protein sequence ID" value="BAE77118.1"/>
    <property type="molecule type" value="Genomic_DNA"/>
</dbReference>
<dbReference type="PIR" id="A65095">
    <property type="entry name" value="RNECS"/>
</dbReference>
<dbReference type="RefSeq" id="NP_417539.1">
    <property type="nucleotide sequence ID" value="NC_000913.3"/>
</dbReference>
<dbReference type="RefSeq" id="WP_000437376.1">
    <property type="nucleotide sequence ID" value="NZ_LN832404.1"/>
</dbReference>
<dbReference type="PDB" id="1SIG">
    <property type="method" value="X-ray"/>
    <property type="resolution" value="2.60 A"/>
    <property type="chains" value="A=114-448"/>
</dbReference>
<dbReference type="PDB" id="1TLH">
    <property type="method" value="NMR"/>
    <property type="chains" value="B=533-613"/>
</dbReference>
<dbReference type="PDB" id="2P7V">
    <property type="method" value="X-ray"/>
    <property type="resolution" value="2.60 A"/>
    <property type="chains" value="B=546-613"/>
</dbReference>
<dbReference type="PDB" id="3IYD">
    <property type="method" value="EM"/>
    <property type="resolution" value="19.80 A"/>
    <property type="chains" value="F=1-613"/>
</dbReference>
<dbReference type="PDB" id="3T72">
    <property type="method" value="X-ray"/>
    <property type="resolution" value="4.33 A"/>
    <property type="chains" value="o/q=533-609"/>
</dbReference>
<dbReference type="PDB" id="4JK1">
    <property type="method" value="X-ray"/>
    <property type="resolution" value="3.90 A"/>
    <property type="chains" value="X/Y=1-613"/>
</dbReference>
<dbReference type="PDB" id="4JK2">
    <property type="method" value="X-ray"/>
    <property type="resolution" value="4.20 A"/>
    <property type="chains" value="X/Y=1-613"/>
</dbReference>
<dbReference type="PDB" id="4JKR">
    <property type="method" value="X-ray"/>
    <property type="resolution" value="4.20 A"/>
    <property type="chains" value="F/L=1-613"/>
</dbReference>
<dbReference type="PDB" id="4KMU">
    <property type="method" value="X-ray"/>
    <property type="resolution" value="3.85 A"/>
    <property type="chains" value="X/Y=1-613"/>
</dbReference>
<dbReference type="PDB" id="4KN4">
    <property type="method" value="X-ray"/>
    <property type="resolution" value="3.96 A"/>
    <property type="chains" value="X/Y=1-613"/>
</dbReference>
<dbReference type="PDB" id="4KN7">
    <property type="method" value="X-ray"/>
    <property type="resolution" value="3.69 A"/>
    <property type="chains" value="X/Y=1-613"/>
</dbReference>
<dbReference type="PDB" id="4LJZ">
    <property type="method" value="X-ray"/>
    <property type="resolution" value="3.59 A"/>
    <property type="chains" value="F/L=92-613"/>
</dbReference>
<dbReference type="PDB" id="4LK0">
    <property type="method" value="X-ray"/>
    <property type="resolution" value="3.91 A"/>
    <property type="chains" value="F/L=92-613"/>
</dbReference>
<dbReference type="PDB" id="4LK1">
    <property type="method" value="X-ray"/>
    <property type="resolution" value="3.84 A"/>
    <property type="chains" value="F/L=1-613"/>
</dbReference>
<dbReference type="PDB" id="4LLG">
    <property type="method" value="X-ray"/>
    <property type="resolution" value="3.79 A"/>
    <property type="chains" value="F/L=1-613"/>
</dbReference>
<dbReference type="PDB" id="4MEX">
    <property type="method" value="X-ray"/>
    <property type="resolution" value="3.90 A"/>
    <property type="chains" value="F/L=1-613"/>
</dbReference>
<dbReference type="PDB" id="4MEY">
    <property type="method" value="X-ray"/>
    <property type="resolution" value="3.95 A"/>
    <property type="chains" value="F/L=1-613"/>
</dbReference>
<dbReference type="PDB" id="4XSX">
    <property type="method" value="X-ray"/>
    <property type="resolution" value="3.71 A"/>
    <property type="chains" value="F/L=92-613"/>
</dbReference>
<dbReference type="PDB" id="4XSY">
    <property type="method" value="X-ray"/>
    <property type="resolution" value="4.01 A"/>
    <property type="chains" value="F/L=92-613"/>
</dbReference>
<dbReference type="PDB" id="4XSZ">
    <property type="method" value="X-ray"/>
    <property type="resolution" value="3.68 A"/>
    <property type="chains" value="F/L=92-613"/>
</dbReference>
<dbReference type="PDB" id="4YFK">
    <property type="method" value="X-ray"/>
    <property type="resolution" value="3.57 A"/>
    <property type="chains" value="F/L=1-613"/>
</dbReference>
<dbReference type="PDB" id="4YFN">
    <property type="method" value="X-ray"/>
    <property type="resolution" value="3.82 A"/>
    <property type="chains" value="F/L=1-613"/>
</dbReference>
<dbReference type="PDB" id="4YFX">
    <property type="method" value="X-ray"/>
    <property type="resolution" value="3.84 A"/>
    <property type="chains" value="F/L=1-613"/>
</dbReference>
<dbReference type="PDB" id="4YG2">
    <property type="method" value="X-ray"/>
    <property type="resolution" value="3.70 A"/>
    <property type="chains" value="F/L=1-613"/>
</dbReference>
<dbReference type="PDB" id="4YLN">
    <property type="method" value="X-ray"/>
    <property type="resolution" value="5.50 A"/>
    <property type="chains" value="F/L/R=1-613"/>
</dbReference>
<dbReference type="PDB" id="4YLO">
    <property type="method" value="X-ray"/>
    <property type="resolution" value="6.00 A"/>
    <property type="chains" value="F/L/R=1-613"/>
</dbReference>
<dbReference type="PDB" id="4YLP">
    <property type="method" value="X-ray"/>
    <property type="resolution" value="5.50 A"/>
    <property type="chains" value="F/L/R=1-613"/>
</dbReference>
<dbReference type="PDB" id="4ZH2">
    <property type="method" value="X-ray"/>
    <property type="resolution" value="4.20 A"/>
    <property type="chains" value="F/L=1-613"/>
</dbReference>
<dbReference type="PDB" id="4ZH3">
    <property type="method" value="X-ray"/>
    <property type="resolution" value="4.08 A"/>
    <property type="chains" value="F/L=1-613"/>
</dbReference>
<dbReference type="PDB" id="4ZH4">
    <property type="method" value="X-ray"/>
    <property type="resolution" value="3.99 A"/>
    <property type="chains" value="F/L=1-613"/>
</dbReference>
<dbReference type="PDB" id="5UAC">
    <property type="method" value="X-ray"/>
    <property type="resolution" value="3.80 A"/>
    <property type="chains" value="F/L=1-613"/>
</dbReference>
<dbReference type="PDB" id="5UAG">
    <property type="method" value="X-ray"/>
    <property type="resolution" value="3.40 A"/>
    <property type="chains" value="F/L=1-613"/>
</dbReference>
<dbReference type="PDB" id="5UAH">
    <property type="method" value="X-ray"/>
    <property type="resolution" value="4.10 A"/>
    <property type="chains" value="F/L=1-613"/>
</dbReference>
<dbReference type="PDB" id="5UAJ">
    <property type="method" value="X-ray"/>
    <property type="resolution" value="3.92 A"/>
    <property type="chains" value="F/L=1-613"/>
</dbReference>
<dbReference type="PDB" id="5UAL">
    <property type="method" value="X-ray"/>
    <property type="resolution" value="3.89 A"/>
    <property type="chains" value="F/L=1-613"/>
</dbReference>
<dbReference type="PDB" id="5UAQ">
    <property type="method" value="X-ray"/>
    <property type="resolution" value="3.60 A"/>
    <property type="chains" value="F/L=1-613"/>
</dbReference>
<dbReference type="PDB" id="5VSW">
    <property type="method" value="X-ray"/>
    <property type="resolution" value="4.29 A"/>
    <property type="chains" value="F/L=1-613"/>
</dbReference>
<dbReference type="PDB" id="5VT0">
    <property type="method" value="EM"/>
    <property type="resolution" value="3.78 A"/>
    <property type="chains" value="L=94-613"/>
</dbReference>
<dbReference type="PDB" id="5W1S">
    <property type="method" value="X-ray"/>
    <property type="resolution" value="3.81 A"/>
    <property type="chains" value="F/L=1-613"/>
</dbReference>
<dbReference type="PDB" id="5W1T">
    <property type="method" value="X-ray"/>
    <property type="resolution" value="4.50 A"/>
    <property type="chains" value="F/L=1-613"/>
</dbReference>
<dbReference type="PDB" id="6B6H">
    <property type="method" value="EM"/>
    <property type="resolution" value="3.90 A"/>
    <property type="chains" value="F=1-613"/>
</dbReference>
<dbReference type="PDB" id="6BYU">
    <property type="method" value="X-ray"/>
    <property type="resolution" value="3.60 A"/>
    <property type="chains" value="F/L=1-613"/>
</dbReference>
<dbReference type="PDB" id="6C9Y">
    <property type="method" value="EM"/>
    <property type="resolution" value="4.25 A"/>
    <property type="chains" value="F=1-613"/>
</dbReference>
<dbReference type="PDB" id="6CA0">
    <property type="method" value="EM"/>
    <property type="resolution" value="5.75 A"/>
    <property type="chains" value="F=1-613"/>
</dbReference>
<dbReference type="PDB" id="6CUX">
    <property type="method" value="X-ray"/>
    <property type="resolution" value="4.10 A"/>
    <property type="chains" value="F/L=1-613"/>
</dbReference>
<dbReference type="PDB" id="6JNX">
    <property type="method" value="EM"/>
    <property type="resolution" value="4.08 A"/>
    <property type="chains" value="F=1-613"/>
</dbReference>
<dbReference type="PDB" id="6K4Y">
    <property type="method" value="EM"/>
    <property type="resolution" value="3.79 A"/>
    <property type="chains" value="F=1-613"/>
</dbReference>
<dbReference type="PDB" id="6LDI">
    <property type="method" value="EM"/>
    <property type="resolution" value="3.69 A"/>
    <property type="chains" value="F=1-613"/>
</dbReference>
<dbReference type="PDB" id="6N4C">
    <property type="method" value="EM"/>
    <property type="resolution" value="17.00 A"/>
    <property type="chains" value="F=8-613"/>
</dbReference>
<dbReference type="PDB" id="6N57">
    <property type="method" value="EM"/>
    <property type="resolution" value="3.70 A"/>
    <property type="chains" value="L=1-613"/>
</dbReference>
<dbReference type="PDB" id="6N58">
    <property type="method" value="EM"/>
    <property type="resolution" value="3.78 A"/>
    <property type="chains" value="L=1-613"/>
</dbReference>
<dbReference type="PDB" id="6N62">
    <property type="method" value="X-ray"/>
    <property type="resolution" value="3.80 A"/>
    <property type="chains" value="F=1-613"/>
</dbReference>
<dbReference type="PDB" id="6OUL">
    <property type="method" value="EM"/>
    <property type="resolution" value="3.40 A"/>
    <property type="chains" value="L=1-613"/>
</dbReference>
<dbReference type="PDB" id="6P18">
    <property type="method" value="EM"/>
    <property type="resolution" value="3.50 A"/>
    <property type="chains" value="F=1-613"/>
</dbReference>
<dbReference type="PDB" id="6P1K">
    <property type="method" value="EM"/>
    <property type="resolution" value="4.05 A"/>
    <property type="chains" value="L=1-613"/>
</dbReference>
<dbReference type="PDB" id="6PB4">
    <property type="method" value="EM"/>
    <property type="resolution" value="4.35 A"/>
    <property type="chains" value="F=1-613"/>
</dbReference>
<dbReference type="PDB" id="6PB5">
    <property type="method" value="EM"/>
    <property type="resolution" value="4.52 A"/>
    <property type="chains" value="F=1-613"/>
</dbReference>
<dbReference type="PDB" id="6PB6">
    <property type="method" value="EM"/>
    <property type="resolution" value="4.29 A"/>
    <property type="chains" value="F=1-613"/>
</dbReference>
<dbReference type="PDB" id="6PSQ">
    <property type="method" value="EM"/>
    <property type="resolution" value="3.40 A"/>
    <property type="chains" value="L=1-613"/>
</dbReference>
<dbReference type="PDB" id="6PSR">
    <property type="method" value="EM"/>
    <property type="resolution" value="3.40 A"/>
    <property type="chains" value="L=1-613"/>
</dbReference>
<dbReference type="PDB" id="6PSS">
    <property type="method" value="EM"/>
    <property type="resolution" value="3.50 A"/>
    <property type="chains" value="L=1-613"/>
</dbReference>
<dbReference type="PDB" id="6PST">
    <property type="method" value="EM"/>
    <property type="resolution" value="3.00 A"/>
    <property type="chains" value="L=1-613"/>
</dbReference>
<dbReference type="PDB" id="6PSU">
    <property type="method" value="EM"/>
    <property type="resolution" value="3.90 A"/>
    <property type="chains" value="L=1-613"/>
</dbReference>
<dbReference type="PDB" id="6PSV">
    <property type="method" value="EM"/>
    <property type="resolution" value="3.50 A"/>
    <property type="chains" value="L=1-613"/>
</dbReference>
<dbReference type="PDB" id="6PSW">
    <property type="method" value="EM"/>
    <property type="resolution" value="3.70 A"/>
    <property type="chains" value="L=1-613"/>
</dbReference>
<dbReference type="PDB" id="6VJS">
    <property type="method" value="X-ray"/>
    <property type="resolution" value="4.02 A"/>
    <property type="chains" value="X/Y=1-613"/>
</dbReference>
<dbReference type="PDB" id="6WMU">
    <property type="method" value="EM"/>
    <property type="resolution" value="3.18 A"/>
    <property type="chains" value="F=1-613"/>
</dbReference>
<dbReference type="PDB" id="6XH7">
    <property type="method" value="EM"/>
    <property type="resolution" value="3.90 A"/>
    <property type="chains" value="F=1-613"/>
</dbReference>
<dbReference type="PDB" id="6XH8">
    <property type="method" value="EM"/>
    <property type="resolution" value="4.10 A"/>
    <property type="chains" value="F=1-613"/>
</dbReference>
<dbReference type="PDB" id="6XL5">
    <property type="method" value="EM"/>
    <property type="resolution" value="2.50 A"/>
    <property type="chains" value="F=1-613"/>
</dbReference>
<dbReference type="PDB" id="6XL9">
    <property type="method" value="EM"/>
    <property type="resolution" value="2.50 A"/>
    <property type="chains" value="F=1-613"/>
</dbReference>
<dbReference type="PDB" id="6XLJ">
    <property type="method" value="EM"/>
    <property type="resolution" value="2.70 A"/>
    <property type="chains" value="F=1-613"/>
</dbReference>
<dbReference type="PDB" id="6XLL">
    <property type="method" value="EM"/>
    <property type="resolution" value="2.70 A"/>
    <property type="chains" value="F=1-613"/>
</dbReference>
<dbReference type="PDB" id="6XLM">
    <property type="method" value="EM"/>
    <property type="resolution" value="3.20 A"/>
    <property type="chains" value="F=1-613"/>
</dbReference>
<dbReference type="PDB" id="7BEF">
    <property type="method" value="EM"/>
    <property type="resolution" value="4.50 A"/>
    <property type="chains" value="F=1-613"/>
</dbReference>
<dbReference type="PDB" id="7BEG">
    <property type="method" value="EM"/>
    <property type="resolution" value="4.20 A"/>
    <property type="chains" value="F=1-613"/>
</dbReference>
<dbReference type="PDB" id="7C17">
    <property type="method" value="EM"/>
    <property type="resolution" value="4.22 A"/>
    <property type="chains" value="F=1-613"/>
</dbReference>
<dbReference type="PDB" id="7C97">
    <property type="method" value="EM"/>
    <property type="resolution" value="3.68 A"/>
    <property type="chains" value="F=1-613"/>
</dbReference>
<dbReference type="PDB" id="7CHW">
    <property type="method" value="EM"/>
    <property type="resolution" value="3.58 A"/>
    <property type="chains" value="F=1-613"/>
</dbReference>
<dbReference type="PDB" id="7DY6">
    <property type="method" value="EM"/>
    <property type="resolution" value="3.68 A"/>
    <property type="chains" value="F=1-613"/>
</dbReference>
<dbReference type="PDB" id="7KHB">
    <property type="method" value="EM"/>
    <property type="resolution" value="3.53 A"/>
    <property type="chains" value="F=1-613"/>
</dbReference>
<dbReference type="PDB" id="7KHC">
    <property type="method" value="EM"/>
    <property type="resolution" value="4.14 A"/>
    <property type="chains" value="F=1-613"/>
</dbReference>
<dbReference type="PDB" id="7KHE">
    <property type="method" value="EM"/>
    <property type="resolution" value="3.58 A"/>
    <property type="chains" value="F=1-613"/>
</dbReference>
<dbReference type="PDB" id="7KHI">
    <property type="method" value="EM"/>
    <property type="resolution" value="3.62 A"/>
    <property type="chains" value="F=1-613"/>
</dbReference>
<dbReference type="PDB" id="7MKD">
    <property type="method" value="EM"/>
    <property type="resolution" value="3.20 A"/>
    <property type="chains" value="L=1-613"/>
</dbReference>
<dbReference type="PDB" id="7MKE">
    <property type="method" value="EM"/>
    <property type="resolution" value="3.70 A"/>
    <property type="chains" value="L=1-613"/>
</dbReference>
<dbReference type="PDB" id="7MKI">
    <property type="method" value="EM"/>
    <property type="resolution" value="3.50 A"/>
    <property type="chains" value="L=1-613"/>
</dbReference>
<dbReference type="PDB" id="7MKJ">
    <property type="method" value="EM"/>
    <property type="resolution" value="2.90 A"/>
    <property type="chains" value="L=1-613"/>
</dbReference>
<dbReference type="PDB" id="7N4E">
    <property type="method" value="EM"/>
    <property type="resolution" value="3.80 A"/>
    <property type="chains" value="F=1-613"/>
</dbReference>
<dbReference type="PDB" id="7SZJ">
    <property type="method" value="EM"/>
    <property type="resolution" value="3.11 A"/>
    <property type="chains" value="F=1-613"/>
</dbReference>
<dbReference type="PDB" id="7SZK">
    <property type="method" value="EM"/>
    <property type="resolution" value="2.94 A"/>
    <property type="chains" value="F=1-613"/>
</dbReference>
<dbReference type="PDB" id="7UBM">
    <property type="method" value="EM"/>
    <property type="resolution" value="3.13 A"/>
    <property type="chains" value="F=1-613"/>
</dbReference>
<dbReference type="PDB" id="7UBN">
    <property type="method" value="EM"/>
    <property type="resolution" value="3.36 A"/>
    <property type="chains" value="F=1-613"/>
</dbReference>
<dbReference type="PDB" id="7VWY">
    <property type="method" value="EM"/>
    <property type="resolution" value="4.57 A"/>
    <property type="chains" value="F=1-613"/>
</dbReference>
<dbReference type="PDB" id="7VWZ">
    <property type="method" value="EM"/>
    <property type="resolution" value="4.00 A"/>
    <property type="chains" value="F=1-613"/>
</dbReference>
<dbReference type="PDB" id="7W5W">
    <property type="method" value="EM"/>
    <property type="resolution" value="4.55 A"/>
    <property type="chains" value="F=1-613"/>
</dbReference>
<dbReference type="PDB" id="7W5X">
    <property type="method" value="EM"/>
    <property type="resolution" value="3.40 A"/>
    <property type="chains" value="F=1-613"/>
</dbReference>
<dbReference type="PDB" id="7W5Y">
    <property type="method" value="EM"/>
    <property type="resolution" value="4.20 A"/>
    <property type="chains" value="F=1-613"/>
</dbReference>
<dbReference type="PDB" id="7XUI">
    <property type="method" value="EM"/>
    <property type="resolution" value="3.61 A"/>
    <property type="chains" value="L=1-613"/>
</dbReference>
<dbReference type="PDB" id="8AD1">
    <property type="method" value="EM"/>
    <property type="resolution" value="4.10 A"/>
    <property type="chains" value="F=1-613"/>
</dbReference>
<dbReference type="PDB" id="8FTD">
    <property type="method" value="EM"/>
    <property type="resolution" value="2.76 A"/>
    <property type="chains" value="L=1-613"/>
</dbReference>
<dbReference type="PDB" id="8IGR">
    <property type="method" value="EM"/>
    <property type="resolution" value="3.10 A"/>
    <property type="chains" value="L=1-613"/>
</dbReference>
<dbReference type="PDB" id="8IGS">
    <property type="method" value="EM"/>
    <property type="resolution" value="3.40 A"/>
    <property type="chains" value="L=1-613"/>
</dbReference>
<dbReference type="PDB" id="8JO2">
    <property type="method" value="EM"/>
    <property type="resolution" value="2.74 A"/>
    <property type="chains" value="F=1-613"/>
</dbReference>
<dbReference type="PDB" id="8K59">
    <property type="method" value="EM"/>
    <property type="resolution" value="3.50 A"/>
    <property type="chains" value="F=90-612"/>
</dbReference>
<dbReference type="PDB" id="8TO1">
    <property type="method" value="EM"/>
    <property type="resolution" value="2.80 A"/>
    <property type="chains" value="L=1-613"/>
</dbReference>
<dbReference type="PDB" id="8TO6">
    <property type="method" value="EM"/>
    <property type="resolution" value="2.90 A"/>
    <property type="chains" value="L=1-613"/>
</dbReference>
<dbReference type="PDB" id="8TO8">
    <property type="method" value="EM"/>
    <property type="resolution" value="2.90 A"/>
    <property type="chains" value="L=1-613"/>
</dbReference>
<dbReference type="PDB" id="8TOE">
    <property type="method" value="EM"/>
    <property type="resolution" value="2.90 A"/>
    <property type="chains" value="L=1-613"/>
</dbReference>
<dbReference type="PDB" id="8TOM">
    <property type="method" value="EM"/>
    <property type="resolution" value="3.10 A"/>
    <property type="chains" value="L=1-613"/>
</dbReference>
<dbReference type="PDB" id="8U3B">
    <property type="method" value="EM"/>
    <property type="resolution" value="3.23 A"/>
    <property type="chains" value="F=1-613"/>
</dbReference>
<dbReference type="PDB" id="8Y6U">
    <property type="method" value="EM"/>
    <property type="resolution" value="3.97 A"/>
    <property type="chains" value="F=1-613"/>
</dbReference>
<dbReference type="PDBsum" id="1SIG"/>
<dbReference type="PDBsum" id="1TLH"/>
<dbReference type="PDBsum" id="2P7V"/>
<dbReference type="PDBsum" id="3IYD"/>
<dbReference type="PDBsum" id="3T72"/>
<dbReference type="PDBsum" id="4JK1"/>
<dbReference type="PDBsum" id="4JK2"/>
<dbReference type="PDBsum" id="4JKR"/>
<dbReference type="PDBsum" id="4KMU"/>
<dbReference type="PDBsum" id="4KN4"/>
<dbReference type="PDBsum" id="4KN7"/>
<dbReference type="PDBsum" id="4LJZ"/>
<dbReference type="PDBsum" id="4LK0"/>
<dbReference type="PDBsum" id="4LK1"/>
<dbReference type="PDBsum" id="4LLG"/>
<dbReference type="PDBsum" id="4MEX"/>
<dbReference type="PDBsum" id="4MEY"/>
<dbReference type="PDBsum" id="4XSX"/>
<dbReference type="PDBsum" id="4XSY"/>
<dbReference type="PDBsum" id="4XSZ"/>
<dbReference type="PDBsum" id="4YFK"/>
<dbReference type="PDBsum" id="4YFN"/>
<dbReference type="PDBsum" id="4YFX"/>
<dbReference type="PDBsum" id="4YG2"/>
<dbReference type="PDBsum" id="4YLN"/>
<dbReference type="PDBsum" id="4YLO"/>
<dbReference type="PDBsum" id="4YLP"/>
<dbReference type="PDBsum" id="4ZH2"/>
<dbReference type="PDBsum" id="4ZH3"/>
<dbReference type="PDBsum" id="4ZH4"/>
<dbReference type="PDBsum" id="5UAC"/>
<dbReference type="PDBsum" id="5UAG"/>
<dbReference type="PDBsum" id="5UAH"/>
<dbReference type="PDBsum" id="5UAJ"/>
<dbReference type="PDBsum" id="5UAL"/>
<dbReference type="PDBsum" id="5UAQ"/>
<dbReference type="PDBsum" id="5VSW"/>
<dbReference type="PDBsum" id="5VT0"/>
<dbReference type="PDBsum" id="5W1S"/>
<dbReference type="PDBsum" id="5W1T"/>
<dbReference type="PDBsum" id="6B6H"/>
<dbReference type="PDBsum" id="6BYU"/>
<dbReference type="PDBsum" id="6C9Y"/>
<dbReference type="PDBsum" id="6CA0"/>
<dbReference type="PDBsum" id="6CUX"/>
<dbReference type="PDBsum" id="6JNX"/>
<dbReference type="PDBsum" id="6K4Y"/>
<dbReference type="PDBsum" id="6LDI"/>
<dbReference type="PDBsum" id="6N4C"/>
<dbReference type="PDBsum" id="6N57"/>
<dbReference type="PDBsum" id="6N58"/>
<dbReference type="PDBsum" id="6N62"/>
<dbReference type="PDBsum" id="6OUL"/>
<dbReference type="PDBsum" id="6P18"/>
<dbReference type="PDBsum" id="6P1K"/>
<dbReference type="PDBsum" id="6PB4"/>
<dbReference type="PDBsum" id="6PB5"/>
<dbReference type="PDBsum" id="6PB6"/>
<dbReference type="PDBsum" id="6PSQ"/>
<dbReference type="PDBsum" id="6PSR"/>
<dbReference type="PDBsum" id="6PSS"/>
<dbReference type="PDBsum" id="6PST"/>
<dbReference type="PDBsum" id="6PSU"/>
<dbReference type="PDBsum" id="6PSV"/>
<dbReference type="PDBsum" id="6PSW"/>
<dbReference type="PDBsum" id="6VJS"/>
<dbReference type="PDBsum" id="6WMU"/>
<dbReference type="PDBsum" id="6XH7"/>
<dbReference type="PDBsum" id="6XH8"/>
<dbReference type="PDBsum" id="6XL5"/>
<dbReference type="PDBsum" id="6XL9"/>
<dbReference type="PDBsum" id="6XLJ"/>
<dbReference type="PDBsum" id="6XLL"/>
<dbReference type="PDBsum" id="6XLM"/>
<dbReference type="PDBsum" id="7BEF"/>
<dbReference type="PDBsum" id="7BEG"/>
<dbReference type="PDBsum" id="7C17"/>
<dbReference type="PDBsum" id="7C97"/>
<dbReference type="PDBsum" id="7CHW"/>
<dbReference type="PDBsum" id="7DY6"/>
<dbReference type="PDBsum" id="7KHB"/>
<dbReference type="PDBsum" id="7KHC"/>
<dbReference type="PDBsum" id="7KHE"/>
<dbReference type="PDBsum" id="7KHI"/>
<dbReference type="PDBsum" id="7MKD"/>
<dbReference type="PDBsum" id="7MKE"/>
<dbReference type="PDBsum" id="7MKI"/>
<dbReference type="PDBsum" id="7MKJ"/>
<dbReference type="PDBsum" id="7N4E"/>
<dbReference type="PDBsum" id="7SZJ"/>
<dbReference type="PDBsum" id="7SZK"/>
<dbReference type="PDBsum" id="7UBM"/>
<dbReference type="PDBsum" id="7UBN"/>
<dbReference type="PDBsum" id="7VWY"/>
<dbReference type="PDBsum" id="7VWZ"/>
<dbReference type="PDBsum" id="7W5W"/>
<dbReference type="PDBsum" id="7W5X"/>
<dbReference type="PDBsum" id="7W5Y"/>
<dbReference type="PDBsum" id="7XUI"/>
<dbReference type="PDBsum" id="8AD1"/>
<dbReference type="PDBsum" id="8FTD"/>
<dbReference type="PDBsum" id="8IGR"/>
<dbReference type="PDBsum" id="8IGS"/>
<dbReference type="PDBsum" id="8JO2"/>
<dbReference type="PDBsum" id="8K59"/>
<dbReference type="PDBsum" id="8TO1"/>
<dbReference type="PDBsum" id="8TO6"/>
<dbReference type="PDBsum" id="8TO8"/>
<dbReference type="PDBsum" id="8TOE"/>
<dbReference type="PDBsum" id="8TOM"/>
<dbReference type="PDBsum" id="8U3B"/>
<dbReference type="PDBsum" id="8Y6U"/>
<dbReference type="BMRB" id="P00579"/>
<dbReference type="EMDB" id="EMD-0340"/>
<dbReference type="EMDB" id="EMD-0874"/>
<dbReference type="EMDB" id="EMD-12156"/>
<dbReference type="EMDB" id="EMD-15357"/>
<dbReference type="EMDB" id="EMD-20233"/>
<dbReference type="EMDB" id="EMD-20286"/>
<dbReference type="EMDB" id="EMD-20287"/>
<dbReference type="EMDB" id="EMD-20288"/>
<dbReference type="EMDB" id="EMD-21879"/>
<dbReference type="EMDB" id="EMD-21881"/>
<dbReference type="EMDB" id="EMD-21883"/>
<dbReference type="EMDB" id="EMD-22184"/>
<dbReference type="EMDB" id="EMD-22185"/>
<dbReference type="EMDB" id="EMD-22234"/>
<dbReference type="EMDB" id="EMD-22236"/>
<dbReference type="EMDB" id="EMD-22245"/>
<dbReference type="EMDB" id="EMD-22247"/>
<dbReference type="EMDB" id="EMD-22248"/>
<dbReference type="EMDB" id="EMD-25570"/>
<dbReference type="EMDB" id="EMD-25571"/>
<dbReference type="EMDB" id="EMD-30268"/>
<dbReference type="EMDB" id="EMD-30914"/>
<dbReference type="EMDB" id="EMD-32165"/>
<dbReference type="EMDB" id="EMD-32166"/>
<dbReference type="EMDB" id="EMD-32322"/>
<dbReference type="EMDB" id="EMD-32323"/>
<dbReference type="EMDB" id="EMD-32324"/>
<dbReference type="EMDB" id="EMD-33470"/>
<dbReference type="EMDB" id="EMD-35438"/>
<dbReference type="EMDB" id="EMD-35439"/>
<dbReference type="EMDB" id="EMD-36898"/>
<dbReference type="EMDB" id="EMD-41439"/>
<dbReference type="EMDB" id="EMD-41856"/>
<dbReference type="EMDB" id="EMD-7059"/>
<dbReference type="EMDB" id="EMD-7438"/>
<dbReference type="EMDB" id="EMD-7439"/>
<dbReference type="EMDB" id="EMD-8732"/>
<dbReference type="EMDB" id="EMD-9852"/>
<dbReference type="EMDB" id="EMD-9916"/>
<dbReference type="SMR" id="P00579"/>
<dbReference type="BioGRID" id="4261068">
    <property type="interactions" value="217"/>
</dbReference>
<dbReference type="BioGRID" id="851883">
    <property type="interactions" value="15"/>
</dbReference>
<dbReference type="ComplexPortal" id="CPX-4881">
    <property type="entry name" value="DNA-directed RNA polymerase holoenzyme complex, Sigma70 variant"/>
</dbReference>
<dbReference type="ComplexPortal" id="CPX-4901">
    <property type="entry name" value="rpod-rsd sigma-antisigma complex"/>
</dbReference>
<dbReference type="DIP" id="DIP-10773N"/>
<dbReference type="FunCoup" id="P00579">
    <property type="interactions" value="424"/>
</dbReference>
<dbReference type="IntAct" id="P00579">
    <property type="interactions" value="56"/>
</dbReference>
<dbReference type="STRING" id="511145.b3067"/>
<dbReference type="jPOST" id="P00579"/>
<dbReference type="PaxDb" id="511145-b3067"/>
<dbReference type="EnsemblBacteria" id="AAC76103">
    <property type="protein sequence ID" value="AAC76103"/>
    <property type="gene ID" value="b3067"/>
</dbReference>
<dbReference type="GeneID" id="947567"/>
<dbReference type="KEGG" id="ecj:JW3039"/>
<dbReference type="KEGG" id="eco:b3067"/>
<dbReference type="KEGG" id="ecoc:C3026_16755"/>
<dbReference type="PATRIC" id="fig|1411691.4.peg.3662"/>
<dbReference type="EchoBASE" id="EB0889"/>
<dbReference type="eggNOG" id="COG0568">
    <property type="taxonomic scope" value="Bacteria"/>
</dbReference>
<dbReference type="HOGENOM" id="CLU_014793_7_2_6"/>
<dbReference type="InParanoid" id="P00579"/>
<dbReference type="OMA" id="AICSVPY"/>
<dbReference type="OrthoDB" id="9809557at2"/>
<dbReference type="PhylomeDB" id="P00579"/>
<dbReference type="BioCyc" id="EcoCyc:RPOD-MONOMER"/>
<dbReference type="BioCyc" id="MetaCyc:RPOD-MONOMER"/>
<dbReference type="EvolutionaryTrace" id="P00579"/>
<dbReference type="PRO" id="PR:P00579"/>
<dbReference type="Proteomes" id="UP000000625">
    <property type="component" value="Chromosome"/>
</dbReference>
<dbReference type="GO" id="GO:0005829">
    <property type="term" value="C:cytosol"/>
    <property type="evidence" value="ECO:0000314"/>
    <property type="project" value="EcoCyc"/>
</dbReference>
<dbReference type="GO" id="GO:0000345">
    <property type="term" value="C:cytosolic DNA-directed RNA polymerase complex"/>
    <property type="evidence" value="ECO:0000353"/>
    <property type="project" value="ComplexPortal"/>
</dbReference>
<dbReference type="GO" id="GO:1903865">
    <property type="term" value="C:sigma factor antagonist complex"/>
    <property type="evidence" value="ECO:0000353"/>
    <property type="project" value="ComplexPortal"/>
</dbReference>
<dbReference type="GO" id="GO:0003677">
    <property type="term" value="F:DNA binding"/>
    <property type="evidence" value="ECO:0007669"/>
    <property type="project" value="UniProtKB-UniRule"/>
</dbReference>
<dbReference type="GO" id="GO:0016987">
    <property type="term" value="F:sigma factor activity"/>
    <property type="evidence" value="ECO:0000314"/>
    <property type="project" value="EcoliWiki"/>
</dbReference>
<dbReference type="GO" id="GO:0006352">
    <property type="term" value="P:DNA-templated transcription initiation"/>
    <property type="evidence" value="ECO:0000314"/>
    <property type="project" value="ComplexPortal"/>
</dbReference>
<dbReference type="GO" id="GO:0045892">
    <property type="term" value="P:negative regulation of DNA-templated transcription"/>
    <property type="evidence" value="ECO:0000303"/>
    <property type="project" value="ComplexPortal"/>
</dbReference>
<dbReference type="GO" id="GO:2000142">
    <property type="term" value="P:regulation of DNA-templated transcription initiation"/>
    <property type="evidence" value="ECO:0000314"/>
    <property type="project" value="ComplexPortal"/>
</dbReference>
<dbReference type="GO" id="GO:0009408">
    <property type="term" value="P:response to heat"/>
    <property type="evidence" value="ECO:0000270"/>
    <property type="project" value="EcoliWiki"/>
</dbReference>
<dbReference type="CDD" id="cd06171">
    <property type="entry name" value="Sigma70_r4"/>
    <property type="match status" value="1"/>
</dbReference>
<dbReference type="FunFam" id="1.10.220.120:FF:000001">
    <property type="entry name" value="RNA polymerase sigma factor RpoD"/>
    <property type="match status" value="1"/>
</dbReference>
<dbReference type="FunFam" id="1.10.601.10:FF:000002">
    <property type="entry name" value="RNA polymerase sigma factor RpoD"/>
    <property type="match status" value="1"/>
</dbReference>
<dbReference type="FunFam" id="1.10.10.10:FF:000002">
    <property type="entry name" value="RNA polymerase sigma factor SigA"/>
    <property type="match status" value="1"/>
</dbReference>
<dbReference type="FunFam" id="1.10.10.10:FF:000004">
    <property type="entry name" value="RNA polymerase sigma factor SigA"/>
    <property type="match status" value="1"/>
</dbReference>
<dbReference type="Gene3D" id="1.10.601.10">
    <property type="entry name" value="RNA Polymerase Primary Sigma Factor"/>
    <property type="match status" value="1"/>
</dbReference>
<dbReference type="Gene3D" id="1.10.220.120">
    <property type="entry name" value="Sigma-70 factor, region 1.1"/>
    <property type="match status" value="1"/>
</dbReference>
<dbReference type="Gene3D" id="1.10.10.10">
    <property type="entry name" value="Winged helix-like DNA-binding domain superfamily/Winged helix DNA-binding domain"/>
    <property type="match status" value="2"/>
</dbReference>
<dbReference type="HAMAP" id="MF_00963">
    <property type="entry name" value="Sigma70_RpoD_SigA"/>
    <property type="match status" value="1"/>
</dbReference>
<dbReference type="InterPro" id="IPR014284">
    <property type="entry name" value="RNA_pol_sigma-70_dom"/>
</dbReference>
<dbReference type="InterPro" id="IPR000943">
    <property type="entry name" value="RNA_pol_sigma70"/>
</dbReference>
<dbReference type="InterPro" id="IPR009042">
    <property type="entry name" value="RNA_pol_sigma70_r1_2"/>
</dbReference>
<dbReference type="InterPro" id="IPR007627">
    <property type="entry name" value="RNA_pol_sigma70_r2"/>
</dbReference>
<dbReference type="InterPro" id="IPR007624">
    <property type="entry name" value="RNA_pol_sigma70_r3"/>
</dbReference>
<dbReference type="InterPro" id="IPR007630">
    <property type="entry name" value="RNA_pol_sigma70_r4"/>
</dbReference>
<dbReference type="InterPro" id="IPR007631">
    <property type="entry name" value="RNA_pol_sigma_70_non-ess"/>
</dbReference>
<dbReference type="InterPro" id="IPR007127">
    <property type="entry name" value="RNA_pol_sigma_70_r1_1"/>
</dbReference>
<dbReference type="InterPro" id="IPR042189">
    <property type="entry name" value="RNA_pol_sigma_70_r1_1_sf"/>
</dbReference>
<dbReference type="InterPro" id="IPR013325">
    <property type="entry name" value="RNA_pol_sigma_r2"/>
</dbReference>
<dbReference type="InterPro" id="IPR013324">
    <property type="entry name" value="RNA_pol_sigma_r3/r4-like"/>
</dbReference>
<dbReference type="InterPro" id="IPR012760">
    <property type="entry name" value="RNA_pol_sigma_RpoD_C"/>
</dbReference>
<dbReference type="InterPro" id="IPR050239">
    <property type="entry name" value="Sigma-70_RNA_pol_init_factors"/>
</dbReference>
<dbReference type="InterPro" id="IPR028630">
    <property type="entry name" value="Sigma70_RpoD"/>
</dbReference>
<dbReference type="InterPro" id="IPR036388">
    <property type="entry name" value="WH-like_DNA-bd_sf"/>
</dbReference>
<dbReference type="NCBIfam" id="NF004208">
    <property type="entry name" value="PRK05658.1"/>
    <property type="match status" value="1"/>
</dbReference>
<dbReference type="NCBIfam" id="TIGR02393">
    <property type="entry name" value="RpoD_Cterm"/>
    <property type="match status" value="1"/>
</dbReference>
<dbReference type="NCBIfam" id="TIGR02937">
    <property type="entry name" value="sigma70-ECF"/>
    <property type="match status" value="1"/>
</dbReference>
<dbReference type="PANTHER" id="PTHR30603">
    <property type="entry name" value="RNA POLYMERASE SIGMA FACTOR RPO"/>
    <property type="match status" value="1"/>
</dbReference>
<dbReference type="PANTHER" id="PTHR30603:SF60">
    <property type="entry name" value="RNA POLYMERASE SIGMA FACTOR RPOD"/>
    <property type="match status" value="1"/>
</dbReference>
<dbReference type="Pfam" id="PF04546">
    <property type="entry name" value="Sigma70_ner"/>
    <property type="match status" value="1"/>
</dbReference>
<dbReference type="Pfam" id="PF03979">
    <property type="entry name" value="Sigma70_r1_1"/>
    <property type="match status" value="1"/>
</dbReference>
<dbReference type="Pfam" id="PF00140">
    <property type="entry name" value="Sigma70_r1_2"/>
    <property type="match status" value="1"/>
</dbReference>
<dbReference type="Pfam" id="PF04542">
    <property type="entry name" value="Sigma70_r2"/>
    <property type="match status" value="1"/>
</dbReference>
<dbReference type="Pfam" id="PF04539">
    <property type="entry name" value="Sigma70_r3"/>
    <property type="match status" value="1"/>
</dbReference>
<dbReference type="Pfam" id="PF04545">
    <property type="entry name" value="Sigma70_r4"/>
    <property type="match status" value="1"/>
</dbReference>
<dbReference type="PRINTS" id="PR00046">
    <property type="entry name" value="SIGMA70FCT"/>
</dbReference>
<dbReference type="SUPFAM" id="SSF88946">
    <property type="entry name" value="Sigma2 domain of RNA polymerase sigma factors"/>
    <property type="match status" value="1"/>
</dbReference>
<dbReference type="SUPFAM" id="SSF88659">
    <property type="entry name" value="Sigma3 and sigma4 domains of RNA polymerase sigma factors"/>
    <property type="match status" value="2"/>
</dbReference>
<dbReference type="PROSITE" id="PS00715">
    <property type="entry name" value="SIGMA70_1"/>
    <property type="match status" value="1"/>
</dbReference>
<dbReference type="PROSITE" id="PS00716">
    <property type="entry name" value="SIGMA70_2"/>
    <property type="match status" value="1"/>
</dbReference>
<organism>
    <name type="scientific">Escherichia coli (strain K12)</name>
    <dbReference type="NCBI Taxonomy" id="83333"/>
    <lineage>
        <taxon>Bacteria</taxon>
        <taxon>Pseudomonadati</taxon>
        <taxon>Pseudomonadota</taxon>
        <taxon>Gammaproteobacteria</taxon>
        <taxon>Enterobacterales</taxon>
        <taxon>Enterobacteriaceae</taxon>
        <taxon>Escherichia</taxon>
    </lineage>
</organism>
<comment type="function">
    <text evidence="1 5 6 9 13 14 15 16">Sigma factors are initiation factors that promote the attachment of RNA polymerase to specific initiation sites and are then released. This sigma factor is the primary sigma factor during exponential growth. Preferentially transcribes genes associated with fast growth, such as ribosomal operons, other protein-synthesis related genes, rRNA- and tRNA-encoding genes and prfB.</text>
</comment>
<comment type="subunit">
    <text evidence="1 4 7 8 10 11 13">Interacts transiently with the RNA polymerase catalytic core formed by RpoA, RpoB, RpoC and RpoZ (2 alpha, 1 beta, 1 beta' and 1 omega subunit) to form the RNA polymerase holoenzyme that can initiate transcription. Identified in a complex containing RpoD, the RNA polymerase subunits RpoA, RpoB and RpoZ, CRP and DNA. Interacts with Rsd; this prevents interaction with the RNA polymerase catalytic core and with promoter DNA, and as a consequence, promotes transcription from promoters that require alternative sigma factors. Interacts with phage T4 AsiA; this interferes with binding to DNA and to the RNA polymerase.</text>
</comment>
<comment type="subunit">
    <text evidence="12">(Microbial infection) Interacts with Escherichia phage lambda antitermination protein Q.</text>
</comment>
<comment type="interaction">
    <interactant intactId="EBI-545104">
        <id>P00579</id>
    </interactant>
    <interactant intactId="EBI-544996">
        <id>P0A8V2</id>
        <label>rpoB</label>
    </interactant>
    <organismsDiffer>false</organismsDiffer>
    <experiments>10</experiments>
</comment>
<comment type="interaction">
    <interactant intactId="EBI-545104">
        <id>P00579</id>
    </interactant>
    <interactant intactId="EBI-543604">
        <id>P0A8T7</id>
        <label>rpoC</label>
    </interactant>
    <organismsDiffer>false</organismsDiffer>
    <experiments>11</experiments>
</comment>
<comment type="interaction">
    <interactant intactId="EBI-545104">
        <id>P00579</id>
    </interactant>
    <interactant intactId="EBI-1134364">
        <id>P0AFX4</id>
        <label>rsd</label>
    </interactant>
    <organismsDiffer>false</organismsDiffer>
    <experiments>11</experiments>
</comment>
<comment type="interaction">
    <interactant intactId="EBI-545104">
        <id>P00579</id>
    </interactant>
    <interactant intactId="EBI-2124737">
        <id>P32267</id>
        <label>asiA</label>
    </interactant>
    <organismsDiffer>true</organismsDiffer>
    <experiments>7</experiments>
</comment>
<comment type="subcellular location">
    <subcellularLocation>
        <location evidence="1">Cytoplasm</location>
    </subcellularLocation>
</comment>
<comment type="domain">
    <text>Contains 4 domains, connected by flexible linkers. In the active conformation, the domains are in an extended conformation, each making extensive interactions with the RNA polymerase catalytic core.</text>
</comment>
<comment type="domain">
    <text evidence="17">In the autoinhibited state, sigma-70 factor domain-1 packs closely together with sigma-70 factor domains-2 and -4, contrary to the extended conformation that is seen when the protein is part of the RNA polymerase holoenzyme.</text>
</comment>
<comment type="domain">
    <text>The sigma-70 factor domain-2 mediates sequence-specific interaction with the -10 element in promoter DNA, and plays an important role in melting the double-stranded DNA and the formation of the transcription bubble. The sigma-70 factor domain-2 mediates interaction with the RNA polymerase subunits RpoB and RpoC.</text>
</comment>
<comment type="domain">
    <text evidence="3">The sigma-70 factor domain-4 contains a helix-turn-helix (H-T-H) motif that mediates interaction with the -35 element in promoter DNA. The domain also mediates interaction with the RNA polymerase subunit RpoA. Interactions between sigma-70 factor domain-4 and anti-sigma factors prevents interaction of sigma factors with the RNA polymerase catalytic core (PubMed:19903881, PubMed:21829166). This domain is probably also responsible for interaction with Crp (PubMed:10860740).</text>
</comment>
<comment type="similarity">
    <text evidence="1">Belongs to the sigma-70 factor family. RpoD/SigA subfamily.</text>
</comment>
<gene>
    <name evidence="1" type="primary">rpoD</name>
    <name type="synonym">alt</name>
    <name type="ordered locus">b3067</name>
    <name type="ordered locus">JW3039</name>
</gene>
<feature type="chain" id="PRO_0000093885" description="RNA polymerase sigma factor RpoD">
    <location>
        <begin position="1"/>
        <end position="613"/>
    </location>
</feature>
<feature type="DNA-binding region" description="H-T-H motif" evidence="1">
    <location>
        <begin position="573"/>
        <end position="592"/>
    </location>
</feature>
<feature type="region of interest" description="Sigma-70 factor domain-1">
    <location>
        <begin position="2"/>
        <end position="80"/>
    </location>
</feature>
<feature type="region of interest" description="Disordered" evidence="2">
    <location>
        <begin position="176"/>
        <end position="213"/>
    </location>
</feature>
<feature type="region of interest" description="Sigma-70 factor domain-2">
    <location>
        <begin position="379"/>
        <end position="449"/>
    </location>
</feature>
<feature type="region of interest" description="Sigma-70 factor domain-3">
    <location>
        <begin position="458"/>
        <end position="534"/>
    </location>
</feature>
<feature type="region of interest" description="Sigma-70 factor domain-4">
    <location>
        <begin position="547"/>
        <end position="600"/>
    </location>
</feature>
<feature type="region of interest" description="Interaction with anti-sigma factors">
    <location>
        <begin position="584"/>
        <end position="599"/>
    </location>
</feature>
<feature type="short sequence motif" description="Interaction with polymerase core subunit RpoC">
    <location>
        <begin position="403"/>
        <end position="406"/>
    </location>
</feature>
<feature type="compositionally biased region" description="Acidic residues" evidence="2">
    <location>
        <begin position="186"/>
        <end position="212"/>
    </location>
</feature>
<feature type="site" description="Interaction with anti-sigma factors">
    <location>
        <position position="562"/>
    </location>
</feature>
<feature type="mutagenesis site" description="Disrupts the interaction with Escherichia phage lambda antitermination protein Q." evidence="12">
    <original>A</original>
    <variation>D</variation>
    <location>
        <position position="553"/>
    </location>
</feature>
<feature type="mutagenesis site" description="2-fold reduction in activation of class II Crp-dependent promoters." evidence="3">
    <original>R</original>
    <variation>D</variation>
    <variation>E</variation>
    <location>
        <position position="596"/>
    </location>
</feature>
<feature type="sequence conflict" description="In Ref. 1; AAA24601." evidence="17" ref="1">
    <original>D</original>
    <variation>N</variation>
    <location>
        <position position="149"/>
    </location>
</feature>
<feature type="helix" evidence="32">
    <location>
        <begin position="8"/>
        <end position="19"/>
    </location>
</feature>
<feature type="helix" evidence="32">
    <location>
        <begin position="24"/>
        <end position="30"/>
    </location>
</feature>
<feature type="helix" evidence="32">
    <location>
        <begin position="39"/>
        <end position="51"/>
    </location>
</feature>
<feature type="strand" evidence="27">
    <location>
        <begin position="55"/>
        <end position="58"/>
    </location>
</feature>
<feature type="helix" evidence="33">
    <location>
        <begin position="62"/>
        <end position="71"/>
    </location>
</feature>
<feature type="helix" evidence="31">
    <location>
        <begin position="81"/>
        <end position="89"/>
    </location>
</feature>
<feature type="helix" evidence="28">
    <location>
        <begin position="97"/>
        <end position="105"/>
    </location>
</feature>
<feature type="strand" evidence="29">
    <location>
        <begin position="106"/>
        <end position="108"/>
    </location>
</feature>
<feature type="helix" evidence="28">
    <location>
        <begin position="113"/>
        <end position="134"/>
    </location>
</feature>
<feature type="helix" evidence="28">
    <location>
        <begin position="138"/>
        <end position="152"/>
    </location>
</feature>
<feature type="turn" evidence="32">
    <location>
        <begin position="153"/>
        <end position="155"/>
    </location>
</feature>
<feature type="helix" evidence="28">
    <location>
        <begin position="158"/>
        <end position="160"/>
    </location>
</feature>
<feature type="strand" evidence="28">
    <location>
        <begin position="162"/>
        <end position="165"/>
    </location>
</feature>
<feature type="turn" evidence="25">
    <location>
        <begin position="179"/>
        <end position="182"/>
    </location>
</feature>
<feature type="turn" evidence="25">
    <location>
        <begin position="187"/>
        <end position="190"/>
    </location>
</feature>
<feature type="helix" evidence="28">
    <location>
        <begin position="214"/>
        <end position="232"/>
    </location>
</feature>
<feature type="turn" evidence="29">
    <location>
        <begin position="237"/>
        <end position="240"/>
    </location>
</feature>
<feature type="helix" evidence="28">
    <location>
        <begin position="245"/>
        <end position="256"/>
    </location>
</feature>
<feature type="strand" evidence="28">
    <location>
        <begin position="259"/>
        <end position="261"/>
    </location>
</feature>
<feature type="helix" evidence="28">
    <location>
        <begin position="263"/>
        <end position="294"/>
    </location>
</feature>
<feature type="turn" evidence="28">
    <location>
        <begin position="302"/>
        <end position="305"/>
    </location>
</feature>
<feature type="helix" evidence="28">
    <location>
        <begin position="306"/>
        <end position="309"/>
    </location>
</feature>
<feature type="strand" evidence="31">
    <location>
        <begin position="310"/>
        <end position="312"/>
    </location>
</feature>
<feature type="turn" evidence="28">
    <location>
        <begin position="313"/>
        <end position="316"/>
    </location>
</feature>
<feature type="helix" evidence="28">
    <location>
        <begin position="317"/>
        <end position="320"/>
    </location>
</feature>
<feature type="strand" evidence="33">
    <location>
        <begin position="322"/>
        <end position="324"/>
    </location>
</feature>
<feature type="helix" evidence="28">
    <location>
        <begin position="325"/>
        <end position="329"/>
    </location>
</feature>
<feature type="helix" evidence="28">
    <location>
        <begin position="330"/>
        <end position="333"/>
    </location>
</feature>
<feature type="turn" evidence="28">
    <location>
        <begin position="334"/>
        <end position="337"/>
    </location>
</feature>
<feature type="helix" evidence="28">
    <location>
        <begin position="338"/>
        <end position="341"/>
    </location>
</feature>
<feature type="helix" evidence="28">
    <location>
        <begin position="344"/>
        <end position="351"/>
    </location>
</feature>
<feature type="helix" evidence="28">
    <location>
        <begin position="355"/>
        <end position="382"/>
    </location>
</feature>
<feature type="helix" evidence="28">
    <location>
        <begin position="384"/>
        <end position="391"/>
    </location>
</feature>
<feature type="helix" evidence="28">
    <location>
        <begin position="392"/>
        <end position="394"/>
    </location>
</feature>
<feature type="strand" evidence="28">
    <location>
        <begin position="397"/>
        <end position="399"/>
    </location>
</feature>
<feature type="helix" evidence="28">
    <location>
        <begin position="401"/>
        <end position="418"/>
    </location>
</feature>
<feature type="helix" evidence="28">
    <location>
        <begin position="421"/>
        <end position="423"/>
    </location>
</feature>
<feature type="helix" evidence="28">
    <location>
        <begin position="427"/>
        <end position="446"/>
    </location>
</feature>
<feature type="strand" evidence="28">
    <location>
        <begin position="447"/>
        <end position="450"/>
    </location>
</feature>
<feature type="helix" evidence="28">
    <location>
        <begin position="454"/>
        <end position="474"/>
    </location>
</feature>
<feature type="helix" evidence="28">
    <location>
        <begin position="480"/>
        <end position="486"/>
    </location>
</feature>
<feature type="strand" evidence="28">
    <location>
        <begin position="487"/>
        <end position="489"/>
    </location>
</feature>
<feature type="helix" evidence="28">
    <location>
        <begin position="491"/>
        <end position="500"/>
    </location>
</feature>
<feature type="strand" evidence="26">
    <location>
        <begin position="506"/>
        <end position="508"/>
    </location>
</feature>
<feature type="helix" evidence="28">
    <location>
        <begin position="511"/>
        <end position="513"/>
    </location>
</feature>
<feature type="strand" evidence="30">
    <location>
        <begin position="515"/>
        <end position="518"/>
    </location>
</feature>
<feature type="helix" evidence="28">
    <location>
        <begin position="519"/>
        <end position="522"/>
    </location>
</feature>
<feature type="strand" evidence="33">
    <location>
        <begin position="526"/>
        <end position="528"/>
    </location>
</feature>
<feature type="helix" evidence="28">
    <location>
        <begin position="531"/>
        <end position="549"/>
    </location>
</feature>
<feature type="helix" evidence="28">
    <location>
        <begin position="553"/>
        <end position="562"/>
    </location>
</feature>
<feature type="turn" evidence="32">
    <location>
        <begin position="564"/>
        <end position="566"/>
    </location>
</feature>
<feature type="strand" evidence="28">
    <location>
        <begin position="567"/>
        <end position="569"/>
    </location>
</feature>
<feature type="helix" evidence="28">
    <location>
        <begin position="573"/>
        <end position="580"/>
    </location>
</feature>
<feature type="helix" evidence="28">
    <location>
        <begin position="584"/>
        <end position="599"/>
    </location>
</feature>
<feature type="helix" evidence="28">
    <location>
        <begin position="601"/>
        <end position="604"/>
    </location>
</feature>
<feature type="turn" evidence="28">
    <location>
        <begin position="605"/>
        <end position="607"/>
    </location>
</feature>
<feature type="helix" evidence="28">
    <location>
        <begin position="608"/>
        <end position="610"/>
    </location>
</feature>
<evidence type="ECO:0000255" key="1">
    <source>
        <dbReference type="HAMAP-Rule" id="MF_00963"/>
    </source>
</evidence>
<evidence type="ECO:0000256" key="2">
    <source>
        <dbReference type="SAM" id="MobiDB-lite"/>
    </source>
</evidence>
<evidence type="ECO:0000269" key="3">
    <source>
    </source>
</evidence>
<evidence type="ECO:0000269" key="4">
    <source>
    </source>
</evidence>
<evidence type="ECO:0000269" key="5">
    <source>
    </source>
</evidence>
<evidence type="ECO:0000269" key="6">
    <source>
    </source>
</evidence>
<evidence type="ECO:0000269" key="7">
    <source>
    </source>
</evidence>
<evidence type="ECO:0000269" key="8">
    <source>
    </source>
</evidence>
<evidence type="ECO:0000269" key="9">
    <source>
    </source>
</evidence>
<evidence type="ECO:0000269" key="10">
    <source>
    </source>
</evidence>
<evidence type="ECO:0000269" key="11">
    <source>
    </source>
</evidence>
<evidence type="ECO:0000269" key="12">
    <source>
    </source>
</evidence>
<evidence type="ECO:0000269" key="13">
    <source>
    </source>
</evidence>
<evidence type="ECO:0000269" key="14">
    <source>
    </source>
</evidence>
<evidence type="ECO:0000269" key="15">
    <source>
    </source>
</evidence>
<evidence type="ECO:0000269" key="16">
    <source>
    </source>
</evidence>
<evidence type="ECO:0000305" key="17"/>
<evidence type="ECO:0007744" key="18">
    <source>
        <dbReference type="PDB" id="1SIG"/>
    </source>
</evidence>
<evidence type="ECO:0007744" key="19">
    <source>
        <dbReference type="PDB" id="1TLH"/>
    </source>
</evidence>
<evidence type="ECO:0007744" key="20">
    <source>
        <dbReference type="PDB" id="3IYD"/>
    </source>
</evidence>
<evidence type="ECO:0007744" key="21">
    <source>
        <dbReference type="PDB" id="3T72"/>
    </source>
</evidence>
<evidence type="ECO:0007744" key="22">
    <source>
        <dbReference type="PDB" id="4MEX"/>
    </source>
</evidence>
<evidence type="ECO:0007744" key="23">
    <source>
        <dbReference type="PDB" id="4MEY"/>
    </source>
</evidence>
<evidence type="ECO:0007744" key="24">
    <source>
        <dbReference type="PDB" id="4YG2"/>
    </source>
</evidence>
<evidence type="ECO:0007829" key="25">
    <source>
        <dbReference type="PDB" id="1SIG"/>
    </source>
</evidence>
<evidence type="ECO:0007829" key="26">
    <source>
        <dbReference type="PDB" id="6PSS"/>
    </source>
</evidence>
<evidence type="ECO:0007829" key="27">
    <source>
        <dbReference type="PDB" id="6PST"/>
    </source>
</evidence>
<evidence type="ECO:0007829" key="28">
    <source>
        <dbReference type="PDB" id="6XL5"/>
    </source>
</evidence>
<evidence type="ECO:0007829" key="29">
    <source>
        <dbReference type="PDB" id="6XL9"/>
    </source>
</evidence>
<evidence type="ECO:0007829" key="30">
    <source>
        <dbReference type="PDB" id="6XLJ"/>
    </source>
</evidence>
<evidence type="ECO:0007829" key="31">
    <source>
        <dbReference type="PDB" id="8JO2"/>
    </source>
</evidence>
<evidence type="ECO:0007829" key="32">
    <source>
        <dbReference type="PDB" id="8TO1"/>
    </source>
</evidence>
<evidence type="ECO:0007829" key="33">
    <source>
        <dbReference type="PDB" id="8TO8"/>
    </source>
</evidence>
<keyword id="KW-0002">3D-structure</keyword>
<keyword id="KW-0963">Cytoplasm</keyword>
<keyword id="KW-0903">Direct protein sequencing</keyword>
<keyword id="KW-0238">DNA-binding</keyword>
<keyword id="KW-1185">Reference proteome</keyword>
<keyword id="KW-0731">Sigma factor</keyword>
<keyword id="KW-0804">Transcription</keyword>
<keyword id="KW-0805">Transcription regulation</keyword>
<name>RPOD_ECOLI</name>